<protein>
    <recommendedName>
        <fullName>Pilin</fullName>
    </recommendedName>
</protein>
<accession>P14495</accession>
<feature type="propeptide" id="PRO_0000024494">
    <location>
        <begin position="1"/>
        <end position="51"/>
    </location>
</feature>
<feature type="chain" id="PRO_0000024495" description="Pilin">
    <location>
        <begin position="52"/>
        <end position="119"/>
    </location>
</feature>
<feature type="topological domain" description="Periplasmic" evidence="1">
    <location>
        <begin position="1"/>
        <end position="73"/>
    </location>
</feature>
<feature type="transmembrane region" description="Helical" evidence="2">
    <location>
        <begin position="74"/>
        <end position="94"/>
    </location>
</feature>
<feature type="topological domain" description="Cytoplasmic" evidence="1">
    <location>
        <begin position="95"/>
        <end position="98"/>
    </location>
</feature>
<feature type="transmembrane region" description="Helical" evidence="2">
    <location>
        <begin position="99"/>
        <end position="119"/>
    </location>
</feature>
<feature type="modified residue" description="N-acetylalanine" evidence="1">
    <location>
        <position position="52"/>
    </location>
</feature>
<gene>
    <name type="primary">traA</name>
</gene>
<reference key="1">
    <citation type="journal article" date="1985" name="J. Bacteriol.">
        <title>Characterization and sequence analysis of pilin from F-like plasmids.</title>
        <authorList>
            <person name="Frost L.S."/>
            <person name="Finlay B.B."/>
            <person name="Opgenorth A."/>
            <person name="Paranchych W."/>
            <person name="Lee J.S."/>
        </authorList>
    </citation>
    <scope>NUCLEOTIDE SEQUENCE [GENOMIC DNA]</scope>
</reference>
<organism>
    <name type="scientific">Escherichia coli</name>
    <dbReference type="NCBI Taxonomy" id="562"/>
    <lineage>
        <taxon>Bacteria</taxon>
        <taxon>Pseudomonadati</taxon>
        <taxon>Pseudomonadota</taxon>
        <taxon>Gammaproteobacteria</taxon>
        <taxon>Enterobacterales</taxon>
        <taxon>Enterobacteriaceae</taxon>
        <taxon>Escherichia</taxon>
    </lineage>
</organism>
<dbReference type="EMBL" id="K03093">
    <property type="protein sequence ID" value="AAA92760.1"/>
    <property type="molecule type" value="Genomic_DNA"/>
</dbReference>
<dbReference type="EMBL" id="K03085">
    <property type="protein sequence ID" value="AAA23012.1"/>
    <property type="molecule type" value="Genomic_DNA"/>
</dbReference>
<dbReference type="PIR" id="B23106">
    <property type="entry name" value="YQECB2"/>
</dbReference>
<dbReference type="RefSeq" id="WP_000994781.1">
    <property type="nucleotide sequence ID" value="NZ_WVVH01000037.1"/>
</dbReference>
<dbReference type="SMR" id="P14495"/>
<dbReference type="GeneID" id="75174242"/>
<dbReference type="GO" id="GO:0005576">
    <property type="term" value="C:extracellular region"/>
    <property type="evidence" value="ECO:0007669"/>
    <property type="project" value="UniProtKB-SubCell"/>
</dbReference>
<dbReference type="GO" id="GO:0005886">
    <property type="term" value="C:plasma membrane"/>
    <property type="evidence" value="ECO:0007669"/>
    <property type="project" value="UniProtKB-SubCell"/>
</dbReference>
<dbReference type="InterPro" id="IPR008873">
    <property type="entry name" value="TraA"/>
</dbReference>
<dbReference type="NCBIfam" id="NF010294">
    <property type="entry name" value="PRK13734.1"/>
    <property type="match status" value="1"/>
</dbReference>
<dbReference type="NCBIfam" id="TIGR02758">
    <property type="entry name" value="TraA_TIGR"/>
    <property type="match status" value="1"/>
</dbReference>
<dbReference type="Pfam" id="PF05513">
    <property type="entry name" value="TraA"/>
    <property type="match status" value="1"/>
</dbReference>
<evidence type="ECO:0000250" key="1"/>
<evidence type="ECO:0000255" key="2"/>
<evidence type="ECO:0000305" key="3"/>
<comment type="function">
    <text evidence="1">Propilin is the precursor of the pilus subunit, pilin, that forms conjugative pili, the filamentous surface appendages required for cell-to-cell contact during the earlier stages of bacterial conjugation, and that retract after contact is established. Mature pilin is assembled with the help of TraQ and TraX (By similarity).</text>
</comment>
<comment type="subunit">
    <text evidence="1">Monomer. Interacts with itself to form filaments; also interacts with TraQ (By similarity).</text>
</comment>
<comment type="subcellular location">
    <subcellularLocation>
        <location>Cell inner membrane</location>
        <topology>Multi-pass membrane protein</topology>
    </subcellularLocation>
    <subcellularLocation>
        <location evidence="1">Secreted</location>
    </subcellularLocation>
    <text evidence="1">Propilin is directed to the inner membrane, where it is cleaved and acetylated. Mature pilin forms filaments that are secreted to form the conjugative pilus (By similarity).</text>
</comment>
<comment type="similarity">
    <text evidence="3">Belongs to the TraA family.</text>
</comment>
<keyword id="KW-0007">Acetylation</keyword>
<keyword id="KW-0997">Cell inner membrane</keyword>
<keyword id="KW-1003">Cell membrane</keyword>
<keyword id="KW-0184">Conjugation</keyword>
<keyword id="KW-0472">Membrane</keyword>
<keyword id="KW-0614">Plasmid</keyword>
<keyword id="KW-0964">Secreted</keyword>
<keyword id="KW-0812">Transmembrane</keyword>
<keyword id="KW-1133">Transmembrane helix</keyword>
<sequence length="119" mass="12665">MNAVLSVQGASAPVKKKSFFSKFTRLNMLRLARAVIPAAVLMMFFPQLAMAAQGQDLMASGNTTVKATFGKDSSVVKWVVLAEVLVGAVMYMMTKNVKFLAGFAIISVFIAVGMAVVGL</sequence>
<name>PIL6_ECOLX</name>
<proteinExistence type="inferred from homology"/>
<geneLocation type="plasmid">
    <name>ColB4</name>
</geneLocation>
<geneLocation type="plasmid">
    <name>ColB2-like</name>
</geneLocation>
<geneLocation type="plasmid">
    <name>IncFIV R124</name>
</geneLocation>
<geneLocation type="plasmid">
    <name>IncFII R538</name>
</geneLocation>